<dbReference type="EC" id="2.7.4.6" evidence="1"/>
<dbReference type="EMBL" id="AE002098">
    <property type="protein sequence ID" value="AAF41682.1"/>
    <property type="molecule type" value="Genomic_DNA"/>
</dbReference>
<dbReference type="PIR" id="A81098">
    <property type="entry name" value="A81098"/>
</dbReference>
<dbReference type="RefSeq" id="NP_274326.1">
    <property type="nucleotide sequence ID" value="NC_003112.2"/>
</dbReference>
<dbReference type="RefSeq" id="WP_002213338.1">
    <property type="nucleotide sequence ID" value="NC_003112.2"/>
</dbReference>
<dbReference type="SMR" id="P65533"/>
<dbReference type="FunCoup" id="P65533">
    <property type="interactions" value="478"/>
</dbReference>
<dbReference type="STRING" id="122586.NMB1307"/>
<dbReference type="PaxDb" id="122586-NMB1307"/>
<dbReference type="GeneID" id="93385892"/>
<dbReference type="KEGG" id="nme:NMB1307"/>
<dbReference type="PATRIC" id="fig|122586.8.peg.1640"/>
<dbReference type="HOGENOM" id="CLU_060216_8_1_4"/>
<dbReference type="InParanoid" id="P65533"/>
<dbReference type="OrthoDB" id="9801161at2"/>
<dbReference type="Proteomes" id="UP000000425">
    <property type="component" value="Chromosome"/>
</dbReference>
<dbReference type="GO" id="GO:0005737">
    <property type="term" value="C:cytoplasm"/>
    <property type="evidence" value="ECO:0007669"/>
    <property type="project" value="UniProtKB-SubCell"/>
</dbReference>
<dbReference type="GO" id="GO:0005524">
    <property type="term" value="F:ATP binding"/>
    <property type="evidence" value="ECO:0007669"/>
    <property type="project" value="UniProtKB-UniRule"/>
</dbReference>
<dbReference type="GO" id="GO:0046872">
    <property type="term" value="F:metal ion binding"/>
    <property type="evidence" value="ECO:0007669"/>
    <property type="project" value="UniProtKB-KW"/>
</dbReference>
<dbReference type="GO" id="GO:0004550">
    <property type="term" value="F:nucleoside diphosphate kinase activity"/>
    <property type="evidence" value="ECO:0007669"/>
    <property type="project" value="UniProtKB-UniRule"/>
</dbReference>
<dbReference type="GO" id="GO:0006241">
    <property type="term" value="P:CTP biosynthetic process"/>
    <property type="evidence" value="ECO:0007669"/>
    <property type="project" value="UniProtKB-UniRule"/>
</dbReference>
<dbReference type="GO" id="GO:0006183">
    <property type="term" value="P:GTP biosynthetic process"/>
    <property type="evidence" value="ECO:0007669"/>
    <property type="project" value="UniProtKB-UniRule"/>
</dbReference>
<dbReference type="GO" id="GO:0006163">
    <property type="term" value="P:purine nucleotide metabolic process"/>
    <property type="evidence" value="ECO:0000318"/>
    <property type="project" value="GO_Central"/>
</dbReference>
<dbReference type="GO" id="GO:0006220">
    <property type="term" value="P:pyrimidine nucleotide metabolic process"/>
    <property type="evidence" value="ECO:0000318"/>
    <property type="project" value="GO_Central"/>
</dbReference>
<dbReference type="GO" id="GO:0006228">
    <property type="term" value="P:UTP biosynthetic process"/>
    <property type="evidence" value="ECO:0007669"/>
    <property type="project" value="UniProtKB-UniRule"/>
</dbReference>
<dbReference type="CDD" id="cd04413">
    <property type="entry name" value="NDPk_I"/>
    <property type="match status" value="1"/>
</dbReference>
<dbReference type="FunFam" id="3.30.70.141:FF:000001">
    <property type="entry name" value="Nucleoside diphosphate kinase"/>
    <property type="match status" value="1"/>
</dbReference>
<dbReference type="Gene3D" id="3.30.70.141">
    <property type="entry name" value="Nucleoside diphosphate kinase-like domain"/>
    <property type="match status" value="1"/>
</dbReference>
<dbReference type="HAMAP" id="MF_00451">
    <property type="entry name" value="NDP_kinase"/>
    <property type="match status" value="1"/>
</dbReference>
<dbReference type="InterPro" id="IPR034907">
    <property type="entry name" value="NDK-like_dom"/>
</dbReference>
<dbReference type="InterPro" id="IPR036850">
    <property type="entry name" value="NDK-like_dom_sf"/>
</dbReference>
<dbReference type="InterPro" id="IPR001564">
    <property type="entry name" value="Nucleoside_diP_kinase"/>
</dbReference>
<dbReference type="InterPro" id="IPR023005">
    <property type="entry name" value="Nucleoside_diP_kinase_AS"/>
</dbReference>
<dbReference type="NCBIfam" id="NF001908">
    <property type="entry name" value="PRK00668.1"/>
    <property type="match status" value="1"/>
</dbReference>
<dbReference type="PANTHER" id="PTHR11349">
    <property type="entry name" value="NUCLEOSIDE DIPHOSPHATE KINASE"/>
    <property type="match status" value="1"/>
</dbReference>
<dbReference type="Pfam" id="PF00334">
    <property type="entry name" value="NDK"/>
    <property type="match status" value="1"/>
</dbReference>
<dbReference type="PRINTS" id="PR01243">
    <property type="entry name" value="NUCDPKINASE"/>
</dbReference>
<dbReference type="SMART" id="SM00562">
    <property type="entry name" value="NDK"/>
    <property type="match status" value="1"/>
</dbReference>
<dbReference type="SUPFAM" id="SSF54919">
    <property type="entry name" value="Nucleoside diphosphate kinase, NDK"/>
    <property type="match status" value="1"/>
</dbReference>
<dbReference type="PROSITE" id="PS00469">
    <property type="entry name" value="NDPK"/>
    <property type="match status" value="1"/>
</dbReference>
<dbReference type="PROSITE" id="PS51374">
    <property type="entry name" value="NDPK_LIKE"/>
    <property type="match status" value="1"/>
</dbReference>
<sequence>MAIERTISIIKPDAVGKNVIGKIYSRFEENGLKIVAAKMKQLTLKEAQEFYAVHKDRPFYAGLVEFMTGGPVMIQVLEGENAVLKNRELMGATNPSEAAEGTIRADFATSVSINAVHGSDSVENAALEIAYFFSQTEICPR</sequence>
<feature type="chain" id="PRO_0000137013" description="Nucleoside diphosphate kinase">
    <location>
        <begin position="1"/>
        <end position="141"/>
    </location>
</feature>
<feature type="active site" description="Pros-phosphohistidine intermediate" evidence="1">
    <location>
        <position position="117"/>
    </location>
</feature>
<feature type="binding site" evidence="1">
    <location>
        <position position="11"/>
    </location>
    <ligand>
        <name>ATP</name>
        <dbReference type="ChEBI" id="CHEBI:30616"/>
    </ligand>
</feature>
<feature type="binding site" evidence="1">
    <location>
        <position position="59"/>
    </location>
    <ligand>
        <name>ATP</name>
        <dbReference type="ChEBI" id="CHEBI:30616"/>
    </ligand>
</feature>
<feature type="binding site" evidence="1">
    <location>
        <position position="87"/>
    </location>
    <ligand>
        <name>ATP</name>
        <dbReference type="ChEBI" id="CHEBI:30616"/>
    </ligand>
</feature>
<feature type="binding site" evidence="1">
    <location>
        <position position="93"/>
    </location>
    <ligand>
        <name>ATP</name>
        <dbReference type="ChEBI" id="CHEBI:30616"/>
    </ligand>
</feature>
<feature type="binding site" evidence="1">
    <location>
        <position position="104"/>
    </location>
    <ligand>
        <name>ATP</name>
        <dbReference type="ChEBI" id="CHEBI:30616"/>
    </ligand>
</feature>
<feature type="binding site" evidence="1">
    <location>
        <position position="114"/>
    </location>
    <ligand>
        <name>ATP</name>
        <dbReference type="ChEBI" id="CHEBI:30616"/>
    </ligand>
</feature>
<evidence type="ECO:0000255" key="1">
    <source>
        <dbReference type="HAMAP-Rule" id="MF_00451"/>
    </source>
</evidence>
<reference key="1">
    <citation type="journal article" date="2000" name="Science">
        <title>Complete genome sequence of Neisseria meningitidis serogroup B strain MC58.</title>
        <authorList>
            <person name="Tettelin H."/>
            <person name="Saunders N.J."/>
            <person name="Heidelberg J.F."/>
            <person name="Jeffries A.C."/>
            <person name="Nelson K.E."/>
            <person name="Eisen J.A."/>
            <person name="Ketchum K.A."/>
            <person name="Hood D.W."/>
            <person name="Peden J.F."/>
            <person name="Dodson R.J."/>
            <person name="Nelson W.C."/>
            <person name="Gwinn M.L."/>
            <person name="DeBoy R.T."/>
            <person name="Peterson J.D."/>
            <person name="Hickey E.K."/>
            <person name="Haft D.H."/>
            <person name="Salzberg S.L."/>
            <person name="White O."/>
            <person name="Fleischmann R.D."/>
            <person name="Dougherty B.A."/>
            <person name="Mason T.M."/>
            <person name="Ciecko A."/>
            <person name="Parksey D.S."/>
            <person name="Blair E."/>
            <person name="Cittone H."/>
            <person name="Clark E.B."/>
            <person name="Cotton M.D."/>
            <person name="Utterback T.R."/>
            <person name="Khouri H.M."/>
            <person name="Qin H."/>
            <person name="Vamathevan J.J."/>
            <person name="Gill J."/>
            <person name="Scarlato V."/>
            <person name="Masignani V."/>
            <person name="Pizza M."/>
            <person name="Grandi G."/>
            <person name="Sun L."/>
            <person name="Smith H.O."/>
            <person name="Fraser C.M."/>
            <person name="Moxon E.R."/>
            <person name="Rappuoli R."/>
            <person name="Venter J.C."/>
        </authorList>
    </citation>
    <scope>NUCLEOTIDE SEQUENCE [LARGE SCALE GENOMIC DNA]</scope>
    <source>
        <strain>ATCC BAA-335 / MC58</strain>
    </source>
</reference>
<protein>
    <recommendedName>
        <fullName evidence="1">Nucleoside diphosphate kinase</fullName>
        <shortName evidence="1">NDK</shortName>
        <shortName evidence="1">NDP kinase</shortName>
        <ecNumber evidence="1">2.7.4.6</ecNumber>
    </recommendedName>
    <alternativeName>
        <fullName evidence="1">Nucleoside-2-P kinase</fullName>
    </alternativeName>
</protein>
<accession>P65533</accession>
<accession>Q9JQU6</accession>
<name>NDK_NEIMB</name>
<keyword id="KW-0067">ATP-binding</keyword>
<keyword id="KW-0963">Cytoplasm</keyword>
<keyword id="KW-0418">Kinase</keyword>
<keyword id="KW-0460">Magnesium</keyword>
<keyword id="KW-0479">Metal-binding</keyword>
<keyword id="KW-0546">Nucleotide metabolism</keyword>
<keyword id="KW-0547">Nucleotide-binding</keyword>
<keyword id="KW-0597">Phosphoprotein</keyword>
<keyword id="KW-1185">Reference proteome</keyword>
<keyword id="KW-0808">Transferase</keyword>
<proteinExistence type="inferred from homology"/>
<organism>
    <name type="scientific">Neisseria meningitidis serogroup B (strain ATCC BAA-335 / MC58)</name>
    <dbReference type="NCBI Taxonomy" id="122586"/>
    <lineage>
        <taxon>Bacteria</taxon>
        <taxon>Pseudomonadati</taxon>
        <taxon>Pseudomonadota</taxon>
        <taxon>Betaproteobacteria</taxon>
        <taxon>Neisseriales</taxon>
        <taxon>Neisseriaceae</taxon>
        <taxon>Neisseria</taxon>
    </lineage>
</organism>
<comment type="function">
    <text evidence="1">Major role in the synthesis of nucleoside triphosphates other than ATP. The ATP gamma phosphate is transferred to the NDP beta phosphate via a ping-pong mechanism, using a phosphorylated active-site intermediate.</text>
</comment>
<comment type="catalytic activity">
    <reaction evidence="1">
        <text>a 2'-deoxyribonucleoside 5'-diphosphate + ATP = a 2'-deoxyribonucleoside 5'-triphosphate + ADP</text>
        <dbReference type="Rhea" id="RHEA:44640"/>
        <dbReference type="ChEBI" id="CHEBI:30616"/>
        <dbReference type="ChEBI" id="CHEBI:61560"/>
        <dbReference type="ChEBI" id="CHEBI:73316"/>
        <dbReference type="ChEBI" id="CHEBI:456216"/>
        <dbReference type="EC" id="2.7.4.6"/>
    </reaction>
</comment>
<comment type="catalytic activity">
    <reaction evidence="1">
        <text>a ribonucleoside 5'-diphosphate + ATP = a ribonucleoside 5'-triphosphate + ADP</text>
        <dbReference type="Rhea" id="RHEA:18113"/>
        <dbReference type="ChEBI" id="CHEBI:30616"/>
        <dbReference type="ChEBI" id="CHEBI:57930"/>
        <dbReference type="ChEBI" id="CHEBI:61557"/>
        <dbReference type="ChEBI" id="CHEBI:456216"/>
        <dbReference type="EC" id="2.7.4.6"/>
    </reaction>
</comment>
<comment type="cofactor">
    <cofactor evidence="1">
        <name>Mg(2+)</name>
        <dbReference type="ChEBI" id="CHEBI:18420"/>
    </cofactor>
</comment>
<comment type="subunit">
    <text evidence="1">Homotetramer.</text>
</comment>
<comment type="subcellular location">
    <subcellularLocation>
        <location evidence="1">Cytoplasm</location>
    </subcellularLocation>
</comment>
<comment type="similarity">
    <text evidence="1">Belongs to the NDK family.</text>
</comment>
<gene>
    <name evidence="1" type="primary">ndk</name>
    <name type="ordered locus">NMB1307</name>
</gene>